<feature type="signal peptide" evidence="2">
    <location>
        <begin position="1"/>
        <end position="30"/>
    </location>
</feature>
<feature type="chain" id="PRO_0000419457" description="Trophoblast glycoprotein-like">
    <location>
        <begin position="31"/>
        <end position="384"/>
    </location>
</feature>
<feature type="topological domain" description="Extracellular" evidence="2">
    <location>
        <begin position="31"/>
        <end position="309"/>
    </location>
</feature>
<feature type="transmembrane region" description="Helical" evidence="2">
    <location>
        <begin position="310"/>
        <end position="330"/>
    </location>
</feature>
<feature type="topological domain" description="Cytoplasmic" evidence="2">
    <location>
        <begin position="331"/>
        <end position="384"/>
    </location>
</feature>
<feature type="repeat" description="LRR 1">
    <location>
        <begin position="61"/>
        <end position="84"/>
    </location>
</feature>
<feature type="repeat" description="LRR 2">
    <location>
        <begin position="95"/>
        <end position="118"/>
    </location>
</feature>
<feature type="repeat" description="LRR 3">
    <location>
        <begin position="119"/>
        <end position="142"/>
    </location>
</feature>
<feature type="repeat" description="LRR 4">
    <location>
        <begin position="173"/>
        <end position="196"/>
    </location>
</feature>
<feature type="repeat" description="LRR 5">
    <location>
        <begin position="198"/>
        <end position="219"/>
    </location>
</feature>
<feature type="region of interest" description="Disordered" evidence="3">
    <location>
        <begin position="361"/>
        <end position="384"/>
    </location>
</feature>
<feature type="compositionally biased region" description="Low complexity" evidence="3">
    <location>
        <begin position="367"/>
        <end position="384"/>
    </location>
</feature>
<feature type="glycosylation site" description="N-linked (GlcNAc...) asparagine" evidence="2">
    <location>
        <position position="66"/>
    </location>
</feature>
<feature type="disulfide bond" evidence="1">
    <location>
        <begin position="31"/>
        <end position="37"/>
    </location>
</feature>
<feature type="disulfide bond" evidence="1">
    <location>
        <begin position="35"/>
        <end position="47"/>
    </location>
</feature>
<feature type="disulfide bond" evidence="1">
    <location>
        <begin position="240"/>
        <end position="266"/>
    </location>
</feature>
<feature type="disulfide bond" evidence="1">
    <location>
        <begin position="242"/>
        <end position="287"/>
    </location>
</feature>
<dbReference type="EMBL" id="AC111086">
    <property type="status" value="NOT_ANNOTATED_CDS"/>
    <property type="molecule type" value="Genomic_DNA"/>
</dbReference>
<dbReference type="EMBL" id="AK032609">
    <property type="protein sequence ID" value="BAC27948.1"/>
    <property type="molecule type" value="mRNA"/>
</dbReference>
<dbReference type="CCDS" id="CCDS57566.1"/>
<dbReference type="RefSeq" id="NP_001182458.1">
    <property type="nucleotide sequence ID" value="NM_001195529.1"/>
</dbReference>
<dbReference type="SMR" id="Q8C013"/>
<dbReference type="FunCoup" id="Q8C013">
    <property type="interactions" value="350"/>
</dbReference>
<dbReference type="STRING" id="10090.ENSMUSP00000137154"/>
<dbReference type="GlyCosmos" id="Q8C013">
    <property type="glycosylation" value="1 site, No reported glycans"/>
</dbReference>
<dbReference type="GlyGen" id="Q8C013">
    <property type="glycosylation" value="1 site"/>
</dbReference>
<dbReference type="PhosphoSitePlus" id="Q8C013"/>
<dbReference type="SwissPalm" id="Q8C013"/>
<dbReference type="PaxDb" id="10090-ENSMUSP00000137154"/>
<dbReference type="ProteomicsDB" id="259161"/>
<dbReference type="Ensembl" id="ENSMUST00000178124.3">
    <property type="protein sequence ID" value="ENSMUSP00000137154.2"/>
    <property type="gene ID" value="ENSMUSG00000096606.3"/>
</dbReference>
<dbReference type="GeneID" id="100503386"/>
<dbReference type="KEGG" id="mmu:100503386"/>
<dbReference type="UCSC" id="uc012fpx.1">
    <property type="organism name" value="mouse"/>
</dbReference>
<dbReference type="AGR" id="MGI:3646425"/>
<dbReference type="CTD" id="100507050"/>
<dbReference type="MGI" id="MGI:3646425">
    <property type="gene designation" value="Tpbgl"/>
</dbReference>
<dbReference type="VEuPathDB" id="HostDB:ENSMUSG00000096606"/>
<dbReference type="eggNOG" id="KOG0619">
    <property type="taxonomic scope" value="Eukaryota"/>
</dbReference>
<dbReference type="GeneTree" id="ENSGT00940000163536"/>
<dbReference type="HOGENOM" id="CLU_064866_0_0_1"/>
<dbReference type="InParanoid" id="Q8C013"/>
<dbReference type="OMA" id="QCYCFGS"/>
<dbReference type="OrthoDB" id="1574204at2759"/>
<dbReference type="PhylomeDB" id="Q8C013"/>
<dbReference type="TreeFam" id="TF351115"/>
<dbReference type="BioGRID-ORCS" id="100503386">
    <property type="hits" value="3 hits in 38 CRISPR screens"/>
</dbReference>
<dbReference type="ChiTaRS" id="Tpbgl">
    <property type="organism name" value="mouse"/>
</dbReference>
<dbReference type="PRO" id="PR:Q8C013"/>
<dbReference type="Proteomes" id="UP000000589">
    <property type="component" value="Chromosome 7"/>
</dbReference>
<dbReference type="RNAct" id="Q8C013">
    <property type="molecule type" value="protein"/>
</dbReference>
<dbReference type="Bgee" id="ENSMUSG00000096606">
    <property type="expression patterns" value="Expressed in vastus lateralis and 150 other cell types or tissues"/>
</dbReference>
<dbReference type="GO" id="GO:0016020">
    <property type="term" value="C:membrane"/>
    <property type="evidence" value="ECO:0007669"/>
    <property type="project" value="UniProtKB-SubCell"/>
</dbReference>
<dbReference type="Gene3D" id="3.80.10.10">
    <property type="entry name" value="Ribonuclease Inhibitor"/>
    <property type="match status" value="2"/>
</dbReference>
<dbReference type="InterPro" id="IPR000483">
    <property type="entry name" value="Cys-rich_flank_reg_C"/>
</dbReference>
<dbReference type="InterPro" id="IPR001611">
    <property type="entry name" value="Leu-rich_rpt"/>
</dbReference>
<dbReference type="InterPro" id="IPR003591">
    <property type="entry name" value="Leu-rich_rpt_typical-subtyp"/>
</dbReference>
<dbReference type="InterPro" id="IPR032675">
    <property type="entry name" value="LRR_dom_sf"/>
</dbReference>
<dbReference type="InterPro" id="IPR052286">
    <property type="entry name" value="Wnt_signaling_inhibitor"/>
</dbReference>
<dbReference type="PANTHER" id="PTHR24364">
    <property type="entry name" value="LP06937P"/>
    <property type="match status" value="1"/>
</dbReference>
<dbReference type="PANTHER" id="PTHR24364:SF16">
    <property type="entry name" value="TROPHOBLAST GLYCOPROTEIN-LIKE"/>
    <property type="match status" value="1"/>
</dbReference>
<dbReference type="Pfam" id="PF13855">
    <property type="entry name" value="LRR_8"/>
    <property type="match status" value="1"/>
</dbReference>
<dbReference type="Pfam" id="PF01463">
    <property type="entry name" value="LRRCT"/>
    <property type="match status" value="2"/>
</dbReference>
<dbReference type="SMART" id="SM00369">
    <property type="entry name" value="LRR_TYP"/>
    <property type="match status" value="3"/>
</dbReference>
<dbReference type="SMART" id="SM00082">
    <property type="entry name" value="LRRCT"/>
    <property type="match status" value="1"/>
</dbReference>
<dbReference type="SUPFAM" id="SSF52058">
    <property type="entry name" value="L domain-like"/>
    <property type="match status" value="1"/>
</dbReference>
<gene>
    <name type="primary">Tpbgl</name>
    <name type="synonym">Gm4980</name>
</gene>
<proteinExistence type="evidence at protein level"/>
<accession>Q8C013</accession>
<evidence type="ECO:0000250" key="1"/>
<evidence type="ECO:0000255" key="2"/>
<evidence type="ECO:0000256" key="3">
    <source>
        <dbReference type="SAM" id="MobiDB-lite"/>
    </source>
</evidence>
<evidence type="ECO:0000305" key="4"/>
<protein>
    <recommendedName>
        <fullName>Trophoblast glycoprotein-like</fullName>
    </recommendedName>
</protein>
<sequence>MAPRAGQRGLWSPLPGLLLLAAALSRPAAPCPFQCYCFGSPRLMLRCASGAELRQPPRDVPPDARNLTIVGANLTVLRAAAFAGGGEGATDGVRLPLLTALRLTHNNIEVVEDGAFDGLPSLAALDLSHNPLRALGYRAFRGLPALRSLQLNHALARGSPGMLDALDAALAPLAELRLLGLVGNALSRLPLAALRLPRLEQLDARVNALAGLGPDELSALERDGDLPQPRLLLADNPLSCGCTSRPLLAWLHNATERVPDARRLRCASPRVLLDRPLIDLDEARLGCSDGDAHESGEGIDVAGPELEASYVFFGLVLALIGLIFLMVLYLNRRGIQRWMHNLREACRDQMEGYHYRYEQDADPRRAPAPAAPAGSRATSPGSGL</sequence>
<name>TPBGL_MOUSE</name>
<keyword id="KW-1015">Disulfide bond</keyword>
<keyword id="KW-0325">Glycoprotein</keyword>
<keyword id="KW-0433">Leucine-rich repeat</keyword>
<keyword id="KW-0472">Membrane</keyword>
<keyword id="KW-1185">Reference proteome</keyword>
<keyword id="KW-0677">Repeat</keyword>
<keyword id="KW-0732">Signal</keyword>
<keyword id="KW-0812">Transmembrane</keyword>
<keyword id="KW-1133">Transmembrane helix</keyword>
<comment type="subcellular location">
    <subcellularLocation>
        <location evidence="4">Membrane</location>
        <topology evidence="4">Single-pass type I membrane protein</topology>
    </subcellularLocation>
</comment>
<organism>
    <name type="scientific">Mus musculus</name>
    <name type="common">Mouse</name>
    <dbReference type="NCBI Taxonomy" id="10090"/>
    <lineage>
        <taxon>Eukaryota</taxon>
        <taxon>Metazoa</taxon>
        <taxon>Chordata</taxon>
        <taxon>Craniata</taxon>
        <taxon>Vertebrata</taxon>
        <taxon>Euteleostomi</taxon>
        <taxon>Mammalia</taxon>
        <taxon>Eutheria</taxon>
        <taxon>Euarchontoglires</taxon>
        <taxon>Glires</taxon>
        <taxon>Rodentia</taxon>
        <taxon>Myomorpha</taxon>
        <taxon>Muroidea</taxon>
        <taxon>Muridae</taxon>
        <taxon>Murinae</taxon>
        <taxon>Mus</taxon>
        <taxon>Mus</taxon>
    </lineage>
</organism>
<reference key="1">
    <citation type="journal article" date="2009" name="PLoS Biol.">
        <title>Lineage-specific biology revealed by a finished genome assembly of the mouse.</title>
        <authorList>
            <person name="Church D.M."/>
            <person name="Goodstadt L."/>
            <person name="Hillier L.W."/>
            <person name="Zody M.C."/>
            <person name="Goldstein S."/>
            <person name="She X."/>
            <person name="Bult C.J."/>
            <person name="Agarwala R."/>
            <person name="Cherry J.L."/>
            <person name="DiCuccio M."/>
            <person name="Hlavina W."/>
            <person name="Kapustin Y."/>
            <person name="Meric P."/>
            <person name="Maglott D."/>
            <person name="Birtle Z."/>
            <person name="Marques A.C."/>
            <person name="Graves T."/>
            <person name="Zhou S."/>
            <person name="Teague B."/>
            <person name="Potamousis K."/>
            <person name="Churas C."/>
            <person name="Place M."/>
            <person name="Herschleb J."/>
            <person name="Runnheim R."/>
            <person name="Forrest D."/>
            <person name="Amos-Landgraf J."/>
            <person name="Schwartz D.C."/>
            <person name="Cheng Z."/>
            <person name="Lindblad-Toh K."/>
            <person name="Eichler E.E."/>
            <person name="Ponting C.P."/>
        </authorList>
    </citation>
    <scope>NUCLEOTIDE SEQUENCE [LARGE SCALE GENOMIC DNA]</scope>
    <source>
        <strain>C57BL/6J</strain>
    </source>
</reference>
<reference key="2">
    <citation type="journal article" date="2005" name="Science">
        <title>The transcriptional landscape of the mammalian genome.</title>
        <authorList>
            <person name="Carninci P."/>
            <person name="Kasukawa T."/>
            <person name="Katayama S."/>
            <person name="Gough J."/>
            <person name="Frith M.C."/>
            <person name="Maeda N."/>
            <person name="Oyama R."/>
            <person name="Ravasi T."/>
            <person name="Lenhard B."/>
            <person name="Wells C."/>
            <person name="Kodzius R."/>
            <person name="Shimokawa K."/>
            <person name="Bajic V.B."/>
            <person name="Brenner S.E."/>
            <person name="Batalov S."/>
            <person name="Forrest A.R."/>
            <person name="Zavolan M."/>
            <person name="Davis M.J."/>
            <person name="Wilming L.G."/>
            <person name="Aidinis V."/>
            <person name="Allen J.E."/>
            <person name="Ambesi-Impiombato A."/>
            <person name="Apweiler R."/>
            <person name="Aturaliya R.N."/>
            <person name="Bailey T.L."/>
            <person name="Bansal M."/>
            <person name="Baxter L."/>
            <person name="Beisel K.W."/>
            <person name="Bersano T."/>
            <person name="Bono H."/>
            <person name="Chalk A.M."/>
            <person name="Chiu K.P."/>
            <person name="Choudhary V."/>
            <person name="Christoffels A."/>
            <person name="Clutterbuck D.R."/>
            <person name="Crowe M.L."/>
            <person name="Dalla E."/>
            <person name="Dalrymple B.P."/>
            <person name="de Bono B."/>
            <person name="Della Gatta G."/>
            <person name="di Bernardo D."/>
            <person name="Down T."/>
            <person name="Engstrom P."/>
            <person name="Fagiolini M."/>
            <person name="Faulkner G."/>
            <person name="Fletcher C.F."/>
            <person name="Fukushima T."/>
            <person name="Furuno M."/>
            <person name="Futaki S."/>
            <person name="Gariboldi M."/>
            <person name="Georgii-Hemming P."/>
            <person name="Gingeras T.R."/>
            <person name="Gojobori T."/>
            <person name="Green R.E."/>
            <person name="Gustincich S."/>
            <person name="Harbers M."/>
            <person name="Hayashi Y."/>
            <person name="Hensch T.K."/>
            <person name="Hirokawa N."/>
            <person name="Hill D."/>
            <person name="Huminiecki L."/>
            <person name="Iacono M."/>
            <person name="Ikeo K."/>
            <person name="Iwama A."/>
            <person name="Ishikawa T."/>
            <person name="Jakt M."/>
            <person name="Kanapin A."/>
            <person name="Katoh M."/>
            <person name="Kawasawa Y."/>
            <person name="Kelso J."/>
            <person name="Kitamura H."/>
            <person name="Kitano H."/>
            <person name="Kollias G."/>
            <person name="Krishnan S.P."/>
            <person name="Kruger A."/>
            <person name="Kummerfeld S.K."/>
            <person name="Kurochkin I.V."/>
            <person name="Lareau L.F."/>
            <person name="Lazarevic D."/>
            <person name="Lipovich L."/>
            <person name="Liu J."/>
            <person name="Liuni S."/>
            <person name="McWilliam S."/>
            <person name="Madan Babu M."/>
            <person name="Madera M."/>
            <person name="Marchionni L."/>
            <person name="Matsuda H."/>
            <person name="Matsuzawa S."/>
            <person name="Miki H."/>
            <person name="Mignone F."/>
            <person name="Miyake S."/>
            <person name="Morris K."/>
            <person name="Mottagui-Tabar S."/>
            <person name="Mulder N."/>
            <person name="Nakano N."/>
            <person name="Nakauchi H."/>
            <person name="Ng P."/>
            <person name="Nilsson R."/>
            <person name="Nishiguchi S."/>
            <person name="Nishikawa S."/>
            <person name="Nori F."/>
            <person name="Ohara O."/>
            <person name="Okazaki Y."/>
            <person name="Orlando V."/>
            <person name="Pang K.C."/>
            <person name="Pavan W.J."/>
            <person name="Pavesi G."/>
            <person name="Pesole G."/>
            <person name="Petrovsky N."/>
            <person name="Piazza S."/>
            <person name="Reed J."/>
            <person name="Reid J.F."/>
            <person name="Ring B.Z."/>
            <person name="Ringwald M."/>
            <person name="Rost B."/>
            <person name="Ruan Y."/>
            <person name="Salzberg S.L."/>
            <person name="Sandelin A."/>
            <person name="Schneider C."/>
            <person name="Schoenbach C."/>
            <person name="Sekiguchi K."/>
            <person name="Semple C.A."/>
            <person name="Seno S."/>
            <person name="Sessa L."/>
            <person name="Sheng Y."/>
            <person name="Shibata Y."/>
            <person name="Shimada H."/>
            <person name="Shimada K."/>
            <person name="Silva D."/>
            <person name="Sinclair B."/>
            <person name="Sperling S."/>
            <person name="Stupka E."/>
            <person name="Sugiura K."/>
            <person name="Sultana R."/>
            <person name="Takenaka Y."/>
            <person name="Taki K."/>
            <person name="Tammoja K."/>
            <person name="Tan S.L."/>
            <person name="Tang S."/>
            <person name="Taylor M.S."/>
            <person name="Tegner J."/>
            <person name="Teichmann S.A."/>
            <person name="Ueda H.R."/>
            <person name="van Nimwegen E."/>
            <person name="Verardo R."/>
            <person name="Wei C.L."/>
            <person name="Yagi K."/>
            <person name="Yamanishi H."/>
            <person name="Zabarovsky E."/>
            <person name="Zhu S."/>
            <person name="Zimmer A."/>
            <person name="Hide W."/>
            <person name="Bult C."/>
            <person name="Grimmond S.M."/>
            <person name="Teasdale R.D."/>
            <person name="Liu E.T."/>
            <person name="Brusic V."/>
            <person name="Quackenbush J."/>
            <person name="Wahlestedt C."/>
            <person name="Mattick J.S."/>
            <person name="Hume D.A."/>
            <person name="Kai C."/>
            <person name="Sasaki D."/>
            <person name="Tomaru Y."/>
            <person name="Fukuda S."/>
            <person name="Kanamori-Katayama M."/>
            <person name="Suzuki M."/>
            <person name="Aoki J."/>
            <person name="Arakawa T."/>
            <person name="Iida J."/>
            <person name="Imamura K."/>
            <person name="Itoh M."/>
            <person name="Kato T."/>
            <person name="Kawaji H."/>
            <person name="Kawagashira N."/>
            <person name="Kawashima T."/>
            <person name="Kojima M."/>
            <person name="Kondo S."/>
            <person name="Konno H."/>
            <person name="Nakano K."/>
            <person name="Ninomiya N."/>
            <person name="Nishio T."/>
            <person name="Okada M."/>
            <person name="Plessy C."/>
            <person name="Shibata K."/>
            <person name="Shiraki T."/>
            <person name="Suzuki S."/>
            <person name="Tagami M."/>
            <person name="Waki K."/>
            <person name="Watahiki A."/>
            <person name="Okamura-Oho Y."/>
            <person name="Suzuki H."/>
            <person name="Kawai J."/>
            <person name="Hayashizaki Y."/>
        </authorList>
    </citation>
    <scope>NUCLEOTIDE SEQUENCE [LARGE SCALE MRNA] OF 159-384</scope>
    <source>
        <strain>C57BL/6J</strain>
        <tissue>Olfactory bulb</tissue>
    </source>
</reference>
<reference key="3">
    <citation type="journal article" date="2010" name="Cell">
        <title>A tissue-specific atlas of mouse protein phosphorylation and expression.</title>
        <authorList>
            <person name="Huttlin E.L."/>
            <person name="Jedrychowski M.P."/>
            <person name="Elias J.E."/>
            <person name="Goswami T."/>
            <person name="Rad R."/>
            <person name="Beausoleil S.A."/>
            <person name="Villen J."/>
            <person name="Haas W."/>
            <person name="Sowa M.E."/>
            <person name="Gygi S.P."/>
        </authorList>
    </citation>
    <scope>IDENTIFICATION BY MASS SPECTROMETRY [LARGE SCALE ANALYSIS]</scope>
    <source>
        <tissue>Testis</tissue>
    </source>
</reference>